<gene>
    <name type="primary">CPAP</name>
    <name evidence="3" type="synonym">CENPJ</name>
</gene>
<feature type="chain" id="PRO_0000089481" description="Centrosomal P4.1-associated protein">
    <location>
        <begin position="1"/>
        <end position="1338"/>
    </location>
</feature>
<feature type="region of interest" description="Disordered" evidence="2">
    <location>
        <begin position="78"/>
        <end position="99"/>
    </location>
</feature>
<feature type="region of interest" description="Disordered" evidence="2">
    <location>
        <begin position="190"/>
        <end position="211"/>
    </location>
</feature>
<feature type="region of interest" description="Alpha/beta-tubulin binding" evidence="1">
    <location>
        <begin position="320"/>
        <end position="395"/>
    </location>
</feature>
<feature type="region of interest" description="Disordered" evidence="2">
    <location>
        <begin position="387"/>
        <end position="415"/>
    </location>
</feature>
<feature type="region of interest" description="Disordered" evidence="2">
    <location>
        <begin position="437"/>
        <end position="480"/>
    </location>
</feature>
<feature type="region of interest" description="Disordered" evidence="2">
    <location>
        <begin position="522"/>
        <end position="552"/>
    </location>
</feature>
<feature type="region of interest" description="Disordered" evidence="2">
    <location>
        <begin position="612"/>
        <end position="790"/>
    </location>
</feature>
<feature type="region of interest" description="Disordered" evidence="2">
    <location>
        <begin position="846"/>
        <end position="903"/>
    </location>
</feature>
<feature type="region of interest" description="Interaction with STIL">
    <location>
        <begin position="896"/>
        <end position="1338"/>
    </location>
</feature>
<feature type="region of interest" description="Disordered" evidence="2">
    <location>
        <begin position="1088"/>
        <end position="1158"/>
    </location>
</feature>
<feature type="compositionally biased region" description="Polar residues" evidence="2">
    <location>
        <begin position="401"/>
        <end position="410"/>
    </location>
</feature>
<feature type="compositionally biased region" description="Basic and acidic residues" evidence="2">
    <location>
        <begin position="542"/>
        <end position="551"/>
    </location>
</feature>
<feature type="compositionally biased region" description="Basic and acidic residues" evidence="2">
    <location>
        <begin position="636"/>
        <end position="651"/>
    </location>
</feature>
<feature type="compositionally biased region" description="Polar residues" evidence="2">
    <location>
        <begin position="680"/>
        <end position="690"/>
    </location>
</feature>
<feature type="compositionally biased region" description="Basic and acidic residues" evidence="2">
    <location>
        <begin position="718"/>
        <end position="765"/>
    </location>
</feature>
<feature type="compositionally biased region" description="Low complexity" evidence="2">
    <location>
        <begin position="781"/>
        <end position="790"/>
    </location>
</feature>
<feature type="modified residue" description="Phosphoserine" evidence="1">
    <location>
        <position position="260"/>
    </location>
</feature>
<feature type="modified residue" description="Phosphoserine" evidence="1">
    <location>
        <position position="317"/>
    </location>
</feature>
<feature type="modified residue" description="Phosphoserine" evidence="1">
    <location>
        <position position="541"/>
    </location>
</feature>
<feature type="modified residue" description="Phosphoserine; by PLK2" evidence="1">
    <location>
        <position position="590"/>
    </location>
</feature>
<feature type="modified residue" description="Phosphoserine; by PLK2" evidence="1">
    <location>
        <position position="596"/>
    </location>
</feature>
<feature type="modified residue" description="Phosphoserine" evidence="1">
    <location>
        <position position="760"/>
    </location>
</feature>
<keyword id="KW-0963">Cytoplasm</keyword>
<keyword id="KW-0206">Cytoskeleton</keyword>
<keyword id="KW-0493">Microtubule</keyword>
<keyword id="KW-0597">Phosphoprotein</keyword>
<keyword id="KW-1185">Reference proteome</keyword>
<accession>Q5BQN8</accession>
<comment type="function">
    <text evidence="1">Plays an important role in cell division and centrosome function by participating in centriole duplication. Inhibits microtubule nucleation from the centrosome. Involved in the regulation of slow processive growth of centriolar microtubules. Acts as microtubule plus-end tracking protein that stabilizes centriolar microtubules and inhibits microtubule polymerization and extension from the distal ends of centrioles. Required for centriole elongation and for STIL-mediated centriole amplification. Required for the recruitment of CEP295 to the proximal end of new-born centrioles at the centriolar microtubule wall during early S phase in a PLK4-dependent manner. May be involved in the control of centriolar-microtubule growth by acting as a regulator of tubulin release (By similarity).</text>
</comment>
<comment type="subunit">
    <text evidence="1">Forms homodimers. Associates with microtubules plus ends; binds to beta-tubulin subunits exposed on microtubule outer surface at its distal tip; also associates with microtubule lattice. Associated with the gamma-tubulin complex. Interacts with the head domain of EPB41. Interacts with LYST. Interacts with CEP152 (via C-terminus). Interacts with STIL. Forms a complex with STIL and SASS6 (By similarity).</text>
</comment>
<comment type="subcellular location">
    <subcellularLocation>
        <location evidence="1">Cytoplasm</location>
        <location evidence="1">Cytoskeleton</location>
        <location evidence="1">Microtubule organizing center</location>
        <location evidence="1">Centrosome</location>
    </subcellularLocation>
    <subcellularLocation>
        <location evidence="1">Cytoplasm</location>
        <location evidence="1">Cytoskeleton</location>
        <location evidence="1">Microtubule organizing center</location>
        <location evidence="1">Centrosome</location>
        <location evidence="1">Centriole</location>
    </subcellularLocation>
    <text evidence="1">Localized within the center of microtubule asters. During centriole biogenesis, it is concentrated within the proximal lumen of both parental centrioles and procentrioles (By similarity).</text>
</comment>
<comment type="PTM">
    <text evidence="1">Phosphorylation at Ser-590 and Ser-596 by PLK2 is required for procentriole formation and centriole elongation. Phosphorylation by PLK2 oscillates during the cell cycle: it increases at G1/S transition and decreases during the exit from mitosis. Phosphorylation at Ser-596 is also mediated by PLK4 but is not a critical step in PLK4 function in procentriole assembly.</text>
</comment>
<comment type="similarity">
    <text evidence="4">Belongs to the TCP10 family.</text>
</comment>
<proteinExistence type="evidence at transcript level"/>
<organism>
    <name type="scientific">Pan troglodytes</name>
    <name type="common">Chimpanzee</name>
    <dbReference type="NCBI Taxonomy" id="9598"/>
    <lineage>
        <taxon>Eukaryota</taxon>
        <taxon>Metazoa</taxon>
        <taxon>Chordata</taxon>
        <taxon>Craniata</taxon>
        <taxon>Vertebrata</taxon>
        <taxon>Euteleostomi</taxon>
        <taxon>Mammalia</taxon>
        <taxon>Eutheria</taxon>
        <taxon>Euarchontoglires</taxon>
        <taxon>Primates</taxon>
        <taxon>Haplorrhini</taxon>
        <taxon>Catarrhini</taxon>
        <taxon>Hominidae</taxon>
        <taxon>Pan</taxon>
    </lineage>
</organism>
<reference key="1">
    <citation type="submission" date="2005-02" db="EMBL/GenBank/DDBJ databases">
        <title>Chimpanzee CENPJ gene.</title>
        <authorList>
            <person name="Springell K."/>
            <person name="Bond J."/>
            <person name="Woods C.G."/>
        </authorList>
    </citation>
    <scope>NUCLEOTIDE SEQUENCE [MRNA]</scope>
</reference>
<dbReference type="EMBL" id="AY917123">
    <property type="protein sequence ID" value="AAX30073.1"/>
    <property type="molecule type" value="mRNA"/>
</dbReference>
<dbReference type="RefSeq" id="NP_001029343.1">
    <property type="nucleotide sequence ID" value="NM_001034171.1"/>
</dbReference>
<dbReference type="BMRB" id="Q5BQN8"/>
<dbReference type="FunCoup" id="Q5BQN8">
    <property type="interactions" value="1437"/>
</dbReference>
<dbReference type="STRING" id="9598.ENSPTRP00000009739"/>
<dbReference type="PaxDb" id="9598-ENSPTRP00000009739"/>
<dbReference type="GeneID" id="467235"/>
<dbReference type="CTD" id="486055"/>
<dbReference type="eggNOG" id="ENOG502QQR0">
    <property type="taxonomic scope" value="Eukaryota"/>
</dbReference>
<dbReference type="InParanoid" id="Q5BQN8"/>
<dbReference type="Proteomes" id="UP000002277">
    <property type="component" value="Unplaced"/>
</dbReference>
<dbReference type="GO" id="GO:0005814">
    <property type="term" value="C:centriole"/>
    <property type="evidence" value="ECO:0000250"/>
    <property type="project" value="UniProtKB"/>
</dbReference>
<dbReference type="GO" id="GO:0005813">
    <property type="term" value="C:centrosome"/>
    <property type="evidence" value="ECO:0000318"/>
    <property type="project" value="GO_Central"/>
</dbReference>
<dbReference type="GO" id="GO:0005737">
    <property type="term" value="C:cytoplasm"/>
    <property type="evidence" value="ECO:0007669"/>
    <property type="project" value="UniProtKB-KW"/>
</dbReference>
<dbReference type="GO" id="GO:0005874">
    <property type="term" value="C:microtubule"/>
    <property type="evidence" value="ECO:0007669"/>
    <property type="project" value="UniProtKB-KW"/>
</dbReference>
<dbReference type="GO" id="GO:0015631">
    <property type="term" value="F:tubulin binding"/>
    <property type="evidence" value="ECO:0000318"/>
    <property type="project" value="GO_Central"/>
</dbReference>
<dbReference type="GO" id="GO:0061511">
    <property type="term" value="P:centriole elongation"/>
    <property type="evidence" value="ECO:0000250"/>
    <property type="project" value="UniProtKB"/>
</dbReference>
<dbReference type="GO" id="GO:0007099">
    <property type="term" value="P:centriole replication"/>
    <property type="evidence" value="ECO:0000250"/>
    <property type="project" value="UniProtKB"/>
</dbReference>
<dbReference type="GO" id="GO:0060271">
    <property type="term" value="P:cilium assembly"/>
    <property type="evidence" value="ECO:0000318"/>
    <property type="project" value="GO_Central"/>
</dbReference>
<dbReference type="GO" id="GO:1903724">
    <property type="term" value="P:positive regulation of centriole elongation"/>
    <property type="evidence" value="ECO:0000250"/>
    <property type="project" value="UniProtKB"/>
</dbReference>
<dbReference type="GO" id="GO:1904951">
    <property type="term" value="P:positive regulation of establishment of protein localization"/>
    <property type="evidence" value="ECO:0000250"/>
    <property type="project" value="UniProtKB"/>
</dbReference>
<dbReference type="GO" id="GO:0046599">
    <property type="term" value="P:regulation of centriole replication"/>
    <property type="evidence" value="ECO:0000250"/>
    <property type="project" value="UniProtKB"/>
</dbReference>
<dbReference type="FunFam" id="2.60.450.20:FF:000001">
    <property type="entry name" value="Centromere protein J"/>
    <property type="match status" value="1"/>
</dbReference>
<dbReference type="Gene3D" id="2.60.450.20">
    <property type="match status" value="1"/>
</dbReference>
<dbReference type="InterPro" id="IPR009852">
    <property type="entry name" value="CENPJ_C_dom"/>
</dbReference>
<dbReference type="InterPro" id="IPR047002">
    <property type="entry name" value="Tcp10_C_sf"/>
</dbReference>
<dbReference type="InterPro" id="IPR026581">
    <property type="entry name" value="TCP10L/CENPJ"/>
</dbReference>
<dbReference type="PANTHER" id="PTHR10331:SF23">
    <property type="entry name" value="CENTROMERE PROTEIN J"/>
    <property type="match status" value="1"/>
</dbReference>
<dbReference type="PANTHER" id="PTHR10331">
    <property type="entry name" value="T COMPLEX PROTEIN 10"/>
    <property type="match status" value="1"/>
</dbReference>
<dbReference type="Pfam" id="PF07202">
    <property type="entry name" value="Tcp10_C"/>
    <property type="match status" value="4"/>
</dbReference>
<protein>
    <recommendedName>
        <fullName>Centrosomal P4.1-associated protein</fullName>
    </recommendedName>
    <alternativeName>
        <fullName>Centromere protein J</fullName>
        <shortName>CENP-J</shortName>
    </alternativeName>
    <alternativeName>
        <fullName>Centrosome assembly and centriole elongation protein</fullName>
    </alternativeName>
</protein>
<name>CPAP_PANTR</name>
<sequence>MFLMPTSSELNSGQNFLTQWMTNPSRAGVILNRGFPILEADKEKRAAVDISTSFPIKGTHFSDSFSFINEEDSLLEEQKLESNSPYKPQSDKSETHTGFPCIKKGPQVAACHSAPGHQEENKNDFIPHLASEFKEGAYKDPLFKKLEQLKEVQQKKQEQLKRQQLEQLQRLMEEQEKLLTMVSGQCTLPGLSLLPDDQSQKHRSPGNTTTGERATCCFPSYVYPDPTQEETYASNILSHEQSNFCRTAHGDFVLTSKRASPNLFSEAQYQEAPVEKNNLKEENRNHPTGESILSCWEKVTEQIQEANDKNLQKHDDSSEVANIEERPIKAAIGERKQTFEDYLEEQIQLEEQELKQKQLKEAEGPLPIKAKPKQPFLKRGEGLARFTNAKSKFQKGKESKLVTNQSTSEDQPLFKMDRQQLQRKTALKNKELCADNPILKKDSKARTKSGSVTLSQKPKMLKCSNRKSLSPSGLKIQTGKKCDGQFRDQIKFEKKVTSNNKENVPECPKPCDTGCTGWNKTQGKDRLPLSTGPASRLAAKSPIRETMKESESSLDVSLQKKLETWEREKEKENLELDEFLFLEQAADEISFSSNSSFVLKILERDQQICKGHRMSSTPVKAVPQKTNPADPISHCNRSEDLDHTAREKESECEVAPKQLHSLSSADELREQPCKIRKAVQKSTSENQTEWNARDDEGVPNSDSSTNSEEQLDVTIKPSTEDRERGISSREDSPQVCDDKGPFKDTRTQEDKRRDVDLDLSDKDYSSDESSMESIKHKVSEPSRSSSLSMSKMDFDDERTWTDLEENLCNHDVVLGNESTYGTPQTCYPNNEIGILDKTIKRKIAPVKRGEDLSKSRRSRSPPTSELMMKFFPSLKPKPKSDSHLGNEPKLNINQDQPPGDNARSQVLREKIIELETEIEKFKAENASLAKLRIERESALEKLRKEIADFEQQKAKELARIEEFKKEEMRKLQKERKVFEKYTTAARTFPDKKEREEIQTLKQQIADLREDLKRKETKWSSTHSRLRSQIEMLVRENTDLREEIKVMERFRLDAWKRAEAIESSLEVEKKDKLANTXVRFQNSQISSGTQVEKYKKNYLPMQGNPPRRSKSAPPRDLGSLDKGQAASPREPPEPLNFPDPEYKEEEDQDIQGEISHPDGKVEKVYKNGCRVILFPNGTRKEVSADGKTITVTFFNGDVKQVMPDQRVIYYYAAAQTTHTTYPEGLEVLHFSSGQIEKHYPDGRKEITFPDQTVKNLFPDGQEESIFPDGTTVRVQRDGNKLIEFNNGQRELHTAQFKRREYPDGTVKTVYANGHQETKYRSGRIRVKDKEGNVLMDTEL</sequence>
<evidence type="ECO:0000250" key="1">
    <source>
        <dbReference type="UniProtKB" id="Q9HC77"/>
    </source>
</evidence>
<evidence type="ECO:0000256" key="2">
    <source>
        <dbReference type="SAM" id="MobiDB-lite"/>
    </source>
</evidence>
<evidence type="ECO:0000303" key="3">
    <source ref="1"/>
</evidence>
<evidence type="ECO:0000305" key="4"/>